<evidence type="ECO:0000255" key="1">
    <source>
        <dbReference type="HAMAP-Rule" id="MF_01214"/>
    </source>
</evidence>
<evidence type="ECO:0000312" key="2">
    <source>
        <dbReference type="EMBL" id="CAJ37391.1"/>
    </source>
</evidence>
<keyword id="KW-0238">DNA-binding</keyword>
<keyword id="KW-1185">Reference proteome</keyword>
<keyword id="KW-0804">Transcription</keyword>
<keyword id="KW-0805">Transcription regulation</keyword>
<accession>Q0W2K2</accession>
<dbReference type="EMBL" id="AM114193">
    <property type="protein sequence ID" value="CAJ37391.1"/>
    <property type="molecule type" value="Genomic_DNA"/>
</dbReference>
<dbReference type="RefSeq" id="WP_012035190.1">
    <property type="nucleotide sequence ID" value="NC_009464.1"/>
</dbReference>
<dbReference type="SMR" id="Q0W2K2"/>
<dbReference type="STRING" id="351160.RCIX2284"/>
<dbReference type="GeneID" id="5145122"/>
<dbReference type="KEGG" id="rci:RCIX2284"/>
<dbReference type="eggNOG" id="arCOG00028">
    <property type="taxonomic scope" value="Archaea"/>
</dbReference>
<dbReference type="OrthoDB" id="68893at2157"/>
<dbReference type="Proteomes" id="UP000000663">
    <property type="component" value="Chromosome"/>
</dbReference>
<dbReference type="GO" id="GO:0003677">
    <property type="term" value="F:DNA binding"/>
    <property type="evidence" value="ECO:0007669"/>
    <property type="project" value="UniProtKB-UniRule"/>
</dbReference>
<dbReference type="GO" id="GO:0004588">
    <property type="term" value="F:orotate phosphoribosyltransferase activity"/>
    <property type="evidence" value="ECO:0007669"/>
    <property type="project" value="TreeGrafter"/>
</dbReference>
<dbReference type="GO" id="GO:0019856">
    <property type="term" value="P:pyrimidine nucleobase biosynthetic process"/>
    <property type="evidence" value="ECO:0007669"/>
    <property type="project" value="TreeGrafter"/>
</dbReference>
<dbReference type="GO" id="GO:0010468">
    <property type="term" value="P:regulation of gene expression"/>
    <property type="evidence" value="ECO:0007669"/>
    <property type="project" value="UniProtKB-UniRule"/>
</dbReference>
<dbReference type="GO" id="GO:0006222">
    <property type="term" value="P:UMP biosynthetic process"/>
    <property type="evidence" value="ECO:0007669"/>
    <property type="project" value="TreeGrafter"/>
</dbReference>
<dbReference type="CDD" id="cd06223">
    <property type="entry name" value="PRTases_typeI"/>
    <property type="match status" value="1"/>
</dbReference>
<dbReference type="Gene3D" id="3.40.50.2020">
    <property type="match status" value="1"/>
</dbReference>
<dbReference type="HAMAP" id="MF_01214">
    <property type="entry name" value="GfcR"/>
    <property type="match status" value="1"/>
</dbReference>
<dbReference type="InterPro" id="IPR022854">
    <property type="entry name" value="GfcR-like"/>
</dbReference>
<dbReference type="InterPro" id="IPR000836">
    <property type="entry name" value="PRibTrfase_dom"/>
</dbReference>
<dbReference type="InterPro" id="IPR029057">
    <property type="entry name" value="PRTase-like"/>
</dbReference>
<dbReference type="NCBIfam" id="NF002620">
    <property type="entry name" value="PRK02277.1"/>
    <property type="match status" value="1"/>
</dbReference>
<dbReference type="PANTHER" id="PTHR19278">
    <property type="entry name" value="OROTATE PHOSPHORIBOSYLTRANSFERASE"/>
    <property type="match status" value="1"/>
</dbReference>
<dbReference type="PANTHER" id="PTHR19278:SF41">
    <property type="entry name" value="PYRE-LIKE PROTEIN"/>
    <property type="match status" value="1"/>
</dbReference>
<dbReference type="Pfam" id="PF00156">
    <property type="entry name" value="Pribosyltran"/>
    <property type="match status" value="1"/>
</dbReference>
<dbReference type="SUPFAM" id="SSF53271">
    <property type="entry name" value="PRTase-like"/>
    <property type="match status" value="1"/>
</dbReference>
<dbReference type="PROSITE" id="PS00103">
    <property type="entry name" value="PUR_PYR_PR_TRANSFER"/>
    <property type="match status" value="1"/>
</dbReference>
<organism>
    <name type="scientific">Methanocella arvoryzae (strain DSM 22066 / NBRC 105507 / MRE50)</name>
    <dbReference type="NCBI Taxonomy" id="351160"/>
    <lineage>
        <taxon>Archaea</taxon>
        <taxon>Methanobacteriati</taxon>
        <taxon>Methanobacteriota</taxon>
        <taxon>Stenosarchaea group</taxon>
        <taxon>Methanomicrobia</taxon>
        <taxon>Methanocellales</taxon>
        <taxon>Methanocellaceae</taxon>
        <taxon>Methanocella</taxon>
    </lineage>
</organism>
<reference key="1">
    <citation type="journal article" date="2006" name="Science">
        <title>Genome of rice cluster I archaea -- the key methane producers in the rice rhizosphere.</title>
        <authorList>
            <person name="Erkel C."/>
            <person name="Kube M."/>
            <person name="Reinhardt R."/>
            <person name="Liesack W."/>
        </authorList>
    </citation>
    <scope>NUCLEOTIDE SEQUENCE [LARGE SCALE GENOMIC DNA]</scope>
    <source>
        <strain>DSM 22066 / NBRC 105507 / MRE50</strain>
    </source>
</reference>
<feature type="chain" id="PRO_0000298906" description="Transcriptional regulator GfcR">
    <location>
        <begin position="1"/>
        <end position="207"/>
    </location>
</feature>
<comment type="domain">
    <text evidence="1">Contains an N-terminal DNA-binding winged helix-turn-helix domain and a C-terminal regulatory domain (or effector binding domain) resembling phosphoribosyltransferase (PRT) domain.</text>
</comment>
<comment type="similarity">
    <text evidence="1">Belongs to the purine/pyrimidine phosphoribosyltransferase family. GfcR subfamily.</text>
</comment>
<proteinExistence type="inferred from homology"/>
<protein>
    <recommendedName>
        <fullName evidence="1">Transcriptional regulator GfcR</fullName>
    </recommendedName>
</protein>
<sequence>MKNVNDLIEKAIELRNRGLRSGEIADELNISRETATWLLTRARKETGAQAPKDIFIDWSTIGKSSSRLMLIATCMADMVEEVLNEMDTNVDVVVGIALSGVPLANVVAYQYGVDLAVIHPGKHRSDDTGKHHQMQPTVSENYANVKGKRCVIIDDVITTGSTMEETIKLIEDQGGEAVAIAVIIDKRGADTISNVPVKHLIRIGRVD</sequence>
<name>GFCR_METAR</name>
<gene>
    <name evidence="1" type="primary">gfcR</name>
    <name evidence="2" type="synonym">pyrE-2</name>
    <name type="ordered locus">UNCMA_08610</name>
    <name type="ORF">RCIX2284</name>
</gene>